<feature type="chain" id="PRO_1000192076" description="UDP-N-acetylglucosamine 1-carboxyvinyltransferase">
    <location>
        <begin position="1"/>
        <end position="416"/>
    </location>
</feature>
<feature type="active site" description="Proton donor" evidence="1">
    <location>
        <position position="115"/>
    </location>
</feature>
<feature type="binding site" evidence="1">
    <location>
        <begin position="22"/>
        <end position="23"/>
    </location>
    <ligand>
        <name>phosphoenolpyruvate</name>
        <dbReference type="ChEBI" id="CHEBI:58702"/>
    </ligand>
</feature>
<feature type="binding site" evidence="1">
    <location>
        <position position="91"/>
    </location>
    <ligand>
        <name>UDP-N-acetyl-alpha-D-glucosamine</name>
        <dbReference type="ChEBI" id="CHEBI:57705"/>
    </ligand>
</feature>
<feature type="binding site" evidence="1">
    <location>
        <begin position="120"/>
        <end position="124"/>
    </location>
    <ligand>
        <name>UDP-N-acetyl-alpha-D-glucosamine</name>
        <dbReference type="ChEBI" id="CHEBI:57705"/>
    </ligand>
</feature>
<feature type="binding site" evidence="1">
    <location>
        <position position="305"/>
    </location>
    <ligand>
        <name>UDP-N-acetyl-alpha-D-glucosamine</name>
        <dbReference type="ChEBI" id="CHEBI:57705"/>
    </ligand>
</feature>
<feature type="binding site" evidence="1">
    <location>
        <position position="327"/>
    </location>
    <ligand>
        <name>UDP-N-acetyl-alpha-D-glucosamine</name>
        <dbReference type="ChEBI" id="CHEBI:57705"/>
    </ligand>
</feature>
<feature type="modified residue" description="2-(S-cysteinyl)pyruvic acid O-phosphothioketal" evidence="1">
    <location>
        <position position="115"/>
    </location>
</feature>
<name>MURA_BUCA5</name>
<sequence length="416" mass="44851">MEKLYVEGNKILNGHVIISGSKNAALPILFMTILTEGKIKIGNIPNLTDINIALKLLVYLGVKITGNETLCIDASSINIFCPPYNLINKIRASIWILGPLLARFGKAKIFLPGGCKIGSRPIDLHLNGLTQLGATINLKNNCIDAYVKGRLQGKYILMEKISVGATITIMSAATLAKGSTIIDNAACEPEIVDIAKFLNTLGADIIGAGSNKICIKGVLKLTGGTHQVIPDRIETGTFLVAAAASQGHITCHKTEPKHLTNVLMKLTEAGAKIKTGKDWIKLDMRGKRPKSLNICTAPYPGFPTDMQAQFALLNSISKGIGTITETIFENRFIYTSELIRMGAKIKIKNNTIICYGIPKLISSNVFSSDLRASATLILAGCIAAGITIVNHTYHLVRGYESFPKKLNKIGANIKII</sequence>
<comment type="function">
    <text evidence="1">Cell wall formation. Adds enolpyruvyl to UDP-N-acetylglucosamine.</text>
</comment>
<comment type="catalytic activity">
    <reaction evidence="1">
        <text>phosphoenolpyruvate + UDP-N-acetyl-alpha-D-glucosamine = UDP-N-acetyl-3-O-(1-carboxyvinyl)-alpha-D-glucosamine + phosphate</text>
        <dbReference type="Rhea" id="RHEA:18681"/>
        <dbReference type="ChEBI" id="CHEBI:43474"/>
        <dbReference type="ChEBI" id="CHEBI:57705"/>
        <dbReference type="ChEBI" id="CHEBI:58702"/>
        <dbReference type="ChEBI" id="CHEBI:68483"/>
        <dbReference type="EC" id="2.5.1.7"/>
    </reaction>
</comment>
<comment type="pathway">
    <text evidence="1">Cell wall biogenesis; peptidoglycan biosynthesis.</text>
</comment>
<comment type="subcellular location">
    <subcellularLocation>
        <location evidence="1">Cytoplasm</location>
    </subcellularLocation>
</comment>
<comment type="similarity">
    <text evidence="1">Belongs to the EPSP synthase family. MurA subfamily.</text>
</comment>
<accession>B8D9G9</accession>
<reference key="1">
    <citation type="journal article" date="2009" name="Science">
        <title>The dynamics and time scale of ongoing genomic erosion in symbiotic bacteria.</title>
        <authorList>
            <person name="Moran N.A."/>
            <person name="McLaughlin H.J."/>
            <person name="Sorek R."/>
        </authorList>
    </citation>
    <scope>NUCLEOTIDE SEQUENCE [LARGE SCALE GENOMIC DNA]</scope>
    <source>
        <strain>5A</strain>
    </source>
</reference>
<organism>
    <name type="scientific">Buchnera aphidicola subsp. Acyrthosiphon pisum (strain 5A)</name>
    <dbReference type="NCBI Taxonomy" id="563178"/>
    <lineage>
        <taxon>Bacteria</taxon>
        <taxon>Pseudomonadati</taxon>
        <taxon>Pseudomonadota</taxon>
        <taxon>Gammaproteobacteria</taxon>
        <taxon>Enterobacterales</taxon>
        <taxon>Erwiniaceae</taxon>
        <taxon>Buchnera</taxon>
    </lineage>
</organism>
<protein>
    <recommendedName>
        <fullName evidence="1">UDP-N-acetylglucosamine 1-carboxyvinyltransferase</fullName>
        <ecNumber evidence="1">2.5.1.7</ecNumber>
    </recommendedName>
    <alternativeName>
        <fullName evidence="1">Enoylpyruvate transferase</fullName>
    </alternativeName>
    <alternativeName>
        <fullName evidence="1">UDP-N-acetylglucosamine enolpyruvyl transferase</fullName>
        <shortName evidence="1">EPT</shortName>
    </alternativeName>
</protein>
<keyword id="KW-0131">Cell cycle</keyword>
<keyword id="KW-0132">Cell division</keyword>
<keyword id="KW-0133">Cell shape</keyword>
<keyword id="KW-0961">Cell wall biogenesis/degradation</keyword>
<keyword id="KW-0963">Cytoplasm</keyword>
<keyword id="KW-0573">Peptidoglycan synthesis</keyword>
<keyword id="KW-0670">Pyruvate</keyword>
<keyword id="KW-0808">Transferase</keyword>
<dbReference type="EC" id="2.5.1.7" evidence="1"/>
<dbReference type="EMBL" id="CP001161">
    <property type="protein sequence ID" value="ACL30740.1"/>
    <property type="molecule type" value="Genomic_DNA"/>
</dbReference>
<dbReference type="RefSeq" id="WP_009874343.1">
    <property type="nucleotide sequence ID" value="NC_011833.1"/>
</dbReference>
<dbReference type="SMR" id="B8D9G9"/>
<dbReference type="KEGG" id="bap:BUAP5A_379"/>
<dbReference type="HOGENOM" id="CLU_027387_0_0_6"/>
<dbReference type="OrthoDB" id="9803760at2"/>
<dbReference type="UniPathway" id="UPA00219"/>
<dbReference type="Proteomes" id="UP000006904">
    <property type="component" value="Chromosome"/>
</dbReference>
<dbReference type="GO" id="GO:0005737">
    <property type="term" value="C:cytoplasm"/>
    <property type="evidence" value="ECO:0007669"/>
    <property type="project" value="UniProtKB-SubCell"/>
</dbReference>
<dbReference type="GO" id="GO:0008760">
    <property type="term" value="F:UDP-N-acetylglucosamine 1-carboxyvinyltransferase activity"/>
    <property type="evidence" value="ECO:0007669"/>
    <property type="project" value="UniProtKB-UniRule"/>
</dbReference>
<dbReference type="GO" id="GO:0051301">
    <property type="term" value="P:cell division"/>
    <property type="evidence" value="ECO:0007669"/>
    <property type="project" value="UniProtKB-KW"/>
</dbReference>
<dbReference type="GO" id="GO:0071555">
    <property type="term" value="P:cell wall organization"/>
    <property type="evidence" value="ECO:0007669"/>
    <property type="project" value="UniProtKB-KW"/>
</dbReference>
<dbReference type="GO" id="GO:0009252">
    <property type="term" value="P:peptidoglycan biosynthetic process"/>
    <property type="evidence" value="ECO:0007669"/>
    <property type="project" value="UniProtKB-UniRule"/>
</dbReference>
<dbReference type="GO" id="GO:0008360">
    <property type="term" value="P:regulation of cell shape"/>
    <property type="evidence" value="ECO:0007669"/>
    <property type="project" value="UniProtKB-KW"/>
</dbReference>
<dbReference type="GO" id="GO:0019277">
    <property type="term" value="P:UDP-N-acetylgalactosamine biosynthetic process"/>
    <property type="evidence" value="ECO:0007669"/>
    <property type="project" value="InterPro"/>
</dbReference>
<dbReference type="CDD" id="cd01555">
    <property type="entry name" value="UdpNAET"/>
    <property type="match status" value="1"/>
</dbReference>
<dbReference type="FunFam" id="3.65.10.10:FF:000001">
    <property type="entry name" value="UDP-N-acetylglucosamine 1-carboxyvinyltransferase"/>
    <property type="match status" value="1"/>
</dbReference>
<dbReference type="Gene3D" id="3.65.10.10">
    <property type="entry name" value="Enolpyruvate transferase domain"/>
    <property type="match status" value="2"/>
</dbReference>
<dbReference type="HAMAP" id="MF_00111">
    <property type="entry name" value="MurA"/>
    <property type="match status" value="1"/>
</dbReference>
<dbReference type="InterPro" id="IPR001986">
    <property type="entry name" value="Enolpyruvate_Tfrase_dom"/>
</dbReference>
<dbReference type="InterPro" id="IPR036968">
    <property type="entry name" value="Enolpyruvate_Tfrase_sf"/>
</dbReference>
<dbReference type="InterPro" id="IPR050068">
    <property type="entry name" value="MurA_subfamily"/>
</dbReference>
<dbReference type="InterPro" id="IPR013792">
    <property type="entry name" value="RNA3'P_cycl/enolpyr_Trfase_a/b"/>
</dbReference>
<dbReference type="InterPro" id="IPR005750">
    <property type="entry name" value="UDP_GlcNAc_COvinyl_MurA"/>
</dbReference>
<dbReference type="NCBIfam" id="TIGR01072">
    <property type="entry name" value="murA"/>
    <property type="match status" value="1"/>
</dbReference>
<dbReference type="NCBIfam" id="NF006873">
    <property type="entry name" value="PRK09369.1"/>
    <property type="match status" value="1"/>
</dbReference>
<dbReference type="PANTHER" id="PTHR43783">
    <property type="entry name" value="UDP-N-ACETYLGLUCOSAMINE 1-CARBOXYVINYLTRANSFERASE"/>
    <property type="match status" value="1"/>
</dbReference>
<dbReference type="PANTHER" id="PTHR43783:SF1">
    <property type="entry name" value="UDP-N-ACETYLGLUCOSAMINE 1-CARBOXYVINYLTRANSFERASE"/>
    <property type="match status" value="1"/>
</dbReference>
<dbReference type="Pfam" id="PF00275">
    <property type="entry name" value="EPSP_synthase"/>
    <property type="match status" value="1"/>
</dbReference>
<dbReference type="SUPFAM" id="SSF55205">
    <property type="entry name" value="EPT/RTPC-like"/>
    <property type="match status" value="1"/>
</dbReference>
<proteinExistence type="inferred from homology"/>
<gene>
    <name evidence="1" type="primary">murA</name>
    <name type="ordered locus">BUAP5A_379</name>
</gene>
<evidence type="ECO:0000255" key="1">
    <source>
        <dbReference type="HAMAP-Rule" id="MF_00111"/>
    </source>
</evidence>